<keyword id="KW-0067">ATP-binding</keyword>
<keyword id="KW-0436">Ligase</keyword>
<keyword id="KW-0460">Magnesium</keyword>
<keyword id="KW-0479">Metal-binding</keyword>
<keyword id="KW-0547">Nucleotide-binding</keyword>
<keyword id="KW-0816">Tricarboxylic acid cycle</keyword>
<organism>
    <name type="scientific">Francisella tularensis subsp. tularensis (strain FSC 198)</name>
    <dbReference type="NCBI Taxonomy" id="393115"/>
    <lineage>
        <taxon>Bacteria</taxon>
        <taxon>Pseudomonadati</taxon>
        <taxon>Pseudomonadota</taxon>
        <taxon>Gammaproteobacteria</taxon>
        <taxon>Thiotrichales</taxon>
        <taxon>Francisellaceae</taxon>
        <taxon>Francisella</taxon>
    </lineage>
</organism>
<proteinExistence type="inferred from homology"/>
<protein>
    <recommendedName>
        <fullName evidence="1">Succinate--CoA ligase [ADP-forming] subunit beta</fullName>
        <ecNumber evidence="1">6.2.1.5</ecNumber>
    </recommendedName>
    <alternativeName>
        <fullName evidence="1">Succinyl-CoA synthetase subunit beta</fullName>
        <shortName evidence="1">SCS-beta</shortName>
    </alternativeName>
</protein>
<name>SUCC_FRAT1</name>
<reference key="1">
    <citation type="journal article" date="2007" name="PLoS ONE">
        <title>Genome sequencing shows that European isolates of Francisella tularensis subspecies tularensis are almost identical to US laboratory strain Schu S4.</title>
        <authorList>
            <person name="Chaudhuri R.R."/>
            <person name="Ren C.-P."/>
            <person name="Desmond L."/>
            <person name="Vincent G.A."/>
            <person name="Silman N.J."/>
            <person name="Brehm J.K."/>
            <person name="Elmore M.J."/>
            <person name="Hudson M.J."/>
            <person name="Forsman M."/>
            <person name="Isherwood K.E."/>
            <person name="Gurycova D."/>
            <person name="Minton N.P."/>
            <person name="Titball R.W."/>
            <person name="Pallen M.J."/>
            <person name="Vipond R."/>
        </authorList>
    </citation>
    <scope>NUCLEOTIDE SEQUENCE [LARGE SCALE GENOMIC DNA]</scope>
    <source>
        <strain>FSC 198</strain>
    </source>
</reference>
<evidence type="ECO:0000255" key="1">
    <source>
        <dbReference type="HAMAP-Rule" id="MF_00558"/>
    </source>
</evidence>
<comment type="function">
    <text evidence="1">Succinyl-CoA synthetase functions in the citric acid cycle (TCA), coupling the hydrolysis of succinyl-CoA to the synthesis of either ATP or GTP and thus represents the only step of substrate-level phosphorylation in the TCA. The beta subunit provides nucleotide specificity of the enzyme and binds the substrate succinate, while the binding sites for coenzyme A and phosphate are found in the alpha subunit.</text>
</comment>
<comment type="catalytic activity">
    <reaction evidence="1">
        <text>succinate + ATP + CoA = succinyl-CoA + ADP + phosphate</text>
        <dbReference type="Rhea" id="RHEA:17661"/>
        <dbReference type="ChEBI" id="CHEBI:30031"/>
        <dbReference type="ChEBI" id="CHEBI:30616"/>
        <dbReference type="ChEBI" id="CHEBI:43474"/>
        <dbReference type="ChEBI" id="CHEBI:57287"/>
        <dbReference type="ChEBI" id="CHEBI:57292"/>
        <dbReference type="ChEBI" id="CHEBI:456216"/>
        <dbReference type="EC" id="6.2.1.5"/>
    </reaction>
    <physiologicalReaction direction="right-to-left" evidence="1">
        <dbReference type="Rhea" id="RHEA:17663"/>
    </physiologicalReaction>
</comment>
<comment type="catalytic activity">
    <reaction evidence="1">
        <text>GTP + succinate + CoA = succinyl-CoA + GDP + phosphate</text>
        <dbReference type="Rhea" id="RHEA:22120"/>
        <dbReference type="ChEBI" id="CHEBI:30031"/>
        <dbReference type="ChEBI" id="CHEBI:37565"/>
        <dbReference type="ChEBI" id="CHEBI:43474"/>
        <dbReference type="ChEBI" id="CHEBI:57287"/>
        <dbReference type="ChEBI" id="CHEBI:57292"/>
        <dbReference type="ChEBI" id="CHEBI:58189"/>
    </reaction>
    <physiologicalReaction direction="right-to-left" evidence="1">
        <dbReference type="Rhea" id="RHEA:22122"/>
    </physiologicalReaction>
</comment>
<comment type="cofactor">
    <cofactor evidence="1">
        <name>Mg(2+)</name>
        <dbReference type="ChEBI" id="CHEBI:18420"/>
    </cofactor>
    <text evidence="1">Binds 1 Mg(2+) ion per subunit.</text>
</comment>
<comment type="pathway">
    <text evidence="1">Carbohydrate metabolism; tricarboxylic acid cycle; succinate from succinyl-CoA (ligase route): step 1/1.</text>
</comment>
<comment type="subunit">
    <text evidence="1">Heterotetramer of two alpha and two beta subunits.</text>
</comment>
<comment type="similarity">
    <text evidence="1">Belongs to the succinate/malate CoA ligase beta subunit family.</text>
</comment>
<dbReference type="EC" id="6.2.1.5" evidence="1"/>
<dbReference type="EMBL" id="AM286280">
    <property type="protein sequence ID" value="CAL08520.1"/>
    <property type="molecule type" value="Genomic_DNA"/>
</dbReference>
<dbReference type="RefSeq" id="WP_003020338.1">
    <property type="nucleotide sequence ID" value="NC_008245.1"/>
</dbReference>
<dbReference type="SMR" id="Q14IV5"/>
<dbReference type="KEGG" id="ftf:FTF0504c"/>
<dbReference type="HOGENOM" id="CLU_037430_0_2_6"/>
<dbReference type="UniPathway" id="UPA00223">
    <property type="reaction ID" value="UER00999"/>
</dbReference>
<dbReference type="GO" id="GO:0005829">
    <property type="term" value="C:cytosol"/>
    <property type="evidence" value="ECO:0007669"/>
    <property type="project" value="TreeGrafter"/>
</dbReference>
<dbReference type="GO" id="GO:0042709">
    <property type="term" value="C:succinate-CoA ligase complex"/>
    <property type="evidence" value="ECO:0007669"/>
    <property type="project" value="TreeGrafter"/>
</dbReference>
<dbReference type="GO" id="GO:0005524">
    <property type="term" value="F:ATP binding"/>
    <property type="evidence" value="ECO:0007669"/>
    <property type="project" value="UniProtKB-UniRule"/>
</dbReference>
<dbReference type="GO" id="GO:0000287">
    <property type="term" value="F:magnesium ion binding"/>
    <property type="evidence" value="ECO:0007669"/>
    <property type="project" value="UniProtKB-UniRule"/>
</dbReference>
<dbReference type="GO" id="GO:0004775">
    <property type="term" value="F:succinate-CoA ligase (ADP-forming) activity"/>
    <property type="evidence" value="ECO:0007669"/>
    <property type="project" value="UniProtKB-UniRule"/>
</dbReference>
<dbReference type="GO" id="GO:0004776">
    <property type="term" value="F:succinate-CoA ligase (GDP-forming) activity"/>
    <property type="evidence" value="ECO:0007669"/>
    <property type="project" value="RHEA"/>
</dbReference>
<dbReference type="GO" id="GO:0006104">
    <property type="term" value="P:succinyl-CoA metabolic process"/>
    <property type="evidence" value="ECO:0007669"/>
    <property type="project" value="TreeGrafter"/>
</dbReference>
<dbReference type="GO" id="GO:0006099">
    <property type="term" value="P:tricarboxylic acid cycle"/>
    <property type="evidence" value="ECO:0007669"/>
    <property type="project" value="UniProtKB-UniRule"/>
</dbReference>
<dbReference type="FunFam" id="3.30.1490.20:FF:000002">
    <property type="entry name" value="Succinate--CoA ligase [ADP-forming] subunit beta"/>
    <property type="match status" value="1"/>
</dbReference>
<dbReference type="FunFam" id="3.30.470.20:FF:000002">
    <property type="entry name" value="Succinate--CoA ligase [ADP-forming] subunit beta"/>
    <property type="match status" value="1"/>
</dbReference>
<dbReference type="FunFam" id="3.40.50.261:FF:000001">
    <property type="entry name" value="Succinate--CoA ligase [ADP-forming] subunit beta"/>
    <property type="match status" value="1"/>
</dbReference>
<dbReference type="Gene3D" id="3.30.1490.20">
    <property type="entry name" value="ATP-grasp fold, A domain"/>
    <property type="match status" value="1"/>
</dbReference>
<dbReference type="Gene3D" id="3.30.470.20">
    <property type="entry name" value="ATP-grasp fold, B domain"/>
    <property type="match status" value="1"/>
</dbReference>
<dbReference type="Gene3D" id="3.40.50.261">
    <property type="entry name" value="Succinyl-CoA synthetase domains"/>
    <property type="match status" value="1"/>
</dbReference>
<dbReference type="HAMAP" id="MF_00558">
    <property type="entry name" value="Succ_CoA_beta"/>
    <property type="match status" value="1"/>
</dbReference>
<dbReference type="InterPro" id="IPR011761">
    <property type="entry name" value="ATP-grasp"/>
</dbReference>
<dbReference type="InterPro" id="IPR013650">
    <property type="entry name" value="ATP-grasp_succ-CoA_synth-type"/>
</dbReference>
<dbReference type="InterPro" id="IPR013815">
    <property type="entry name" value="ATP_grasp_subdomain_1"/>
</dbReference>
<dbReference type="InterPro" id="IPR017866">
    <property type="entry name" value="Succ-CoA_synthase_bsu_CS"/>
</dbReference>
<dbReference type="InterPro" id="IPR005811">
    <property type="entry name" value="SUCC_ACL_C"/>
</dbReference>
<dbReference type="InterPro" id="IPR005809">
    <property type="entry name" value="Succ_CoA_ligase-like_bsu"/>
</dbReference>
<dbReference type="InterPro" id="IPR016102">
    <property type="entry name" value="Succinyl-CoA_synth-like"/>
</dbReference>
<dbReference type="NCBIfam" id="NF001913">
    <property type="entry name" value="PRK00696.1"/>
    <property type="match status" value="1"/>
</dbReference>
<dbReference type="NCBIfam" id="TIGR01016">
    <property type="entry name" value="sucCoAbeta"/>
    <property type="match status" value="1"/>
</dbReference>
<dbReference type="PANTHER" id="PTHR11815:SF10">
    <property type="entry name" value="SUCCINATE--COA LIGASE [GDP-FORMING] SUBUNIT BETA, MITOCHONDRIAL"/>
    <property type="match status" value="1"/>
</dbReference>
<dbReference type="PANTHER" id="PTHR11815">
    <property type="entry name" value="SUCCINYL-COA SYNTHETASE BETA CHAIN"/>
    <property type="match status" value="1"/>
</dbReference>
<dbReference type="Pfam" id="PF08442">
    <property type="entry name" value="ATP-grasp_2"/>
    <property type="match status" value="1"/>
</dbReference>
<dbReference type="Pfam" id="PF00549">
    <property type="entry name" value="Ligase_CoA"/>
    <property type="match status" value="1"/>
</dbReference>
<dbReference type="PIRSF" id="PIRSF001554">
    <property type="entry name" value="SucCS_beta"/>
    <property type="match status" value="1"/>
</dbReference>
<dbReference type="SUPFAM" id="SSF56059">
    <property type="entry name" value="Glutathione synthetase ATP-binding domain-like"/>
    <property type="match status" value="1"/>
</dbReference>
<dbReference type="SUPFAM" id="SSF52210">
    <property type="entry name" value="Succinyl-CoA synthetase domains"/>
    <property type="match status" value="1"/>
</dbReference>
<dbReference type="PROSITE" id="PS50975">
    <property type="entry name" value="ATP_GRASP"/>
    <property type="match status" value="1"/>
</dbReference>
<dbReference type="PROSITE" id="PS01217">
    <property type="entry name" value="SUCCINYL_COA_LIG_3"/>
    <property type="match status" value="1"/>
</dbReference>
<sequence>MNLHEYQAKDLLESYGLKVQKGIVAHNPNEAAQAFDQLGGKFAVVKAQVHAGGRGKAGGVKVVKSSQEAREVAESLIGKNLVTFQTDAEGQPVNSVGVFEDVYPVTRELYLGAVVDRSSRKVTFMASTEGGVDIEEVAHNSPEKILKVEVDPLVGLQPFQAREVAFKLGLEGKQINDFVKTMLGAYKAFIECDFALFEINPLAVRENGEIVCVDGKINLDSNALYRHPKLLALRDKSQENAKELKASEHELNYVALEGNIGCMVNGAGLAMATMDIIQLYGGKPANFLDVGGGATKERVIEAFKLILDDENVKAILINIFGGIVRCDMIAEAIIEAVKEVNVTVPVVVRLEGNNAEKGAKILADSGLKLIPADGLADAADKVVKSLG</sequence>
<gene>
    <name evidence="1" type="primary">sucC</name>
    <name type="ordered locus">FTF0504c</name>
</gene>
<feature type="chain" id="PRO_1000082088" description="Succinate--CoA ligase [ADP-forming] subunit beta">
    <location>
        <begin position="1"/>
        <end position="387"/>
    </location>
</feature>
<feature type="domain" description="ATP-grasp" evidence="1">
    <location>
        <begin position="9"/>
        <end position="245"/>
    </location>
</feature>
<feature type="binding site" evidence="1">
    <location>
        <position position="46"/>
    </location>
    <ligand>
        <name>ATP</name>
        <dbReference type="ChEBI" id="CHEBI:30616"/>
    </ligand>
</feature>
<feature type="binding site" evidence="1">
    <location>
        <begin position="53"/>
        <end position="55"/>
    </location>
    <ligand>
        <name>ATP</name>
        <dbReference type="ChEBI" id="CHEBI:30616"/>
    </ligand>
</feature>
<feature type="binding site" evidence="1">
    <location>
        <position position="100"/>
    </location>
    <ligand>
        <name>ATP</name>
        <dbReference type="ChEBI" id="CHEBI:30616"/>
    </ligand>
</feature>
<feature type="binding site" evidence="1">
    <location>
        <position position="103"/>
    </location>
    <ligand>
        <name>ATP</name>
        <dbReference type="ChEBI" id="CHEBI:30616"/>
    </ligand>
</feature>
<feature type="binding site" evidence="1">
    <location>
        <position position="108"/>
    </location>
    <ligand>
        <name>ATP</name>
        <dbReference type="ChEBI" id="CHEBI:30616"/>
    </ligand>
</feature>
<feature type="binding site" evidence="1">
    <location>
        <position position="200"/>
    </location>
    <ligand>
        <name>Mg(2+)</name>
        <dbReference type="ChEBI" id="CHEBI:18420"/>
    </ligand>
</feature>
<feature type="binding site" evidence="1">
    <location>
        <position position="214"/>
    </location>
    <ligand>
        <name>Mg(2+)</name>
        <dbReference type="ChEBI" id="CHEBI:18420"/>
    </ligand>
</feature>
<feature type="binding site" evidence="1">
    <location>
        <position position="265"/>
    </location>
    <ligand>
        <name>substrate</name>
        <note>ligand shared with subunit alpha</note>
    </ligand>
</feature>
<feature type="binding site" evidence="1">
    <location>
        <begin position="322"/>
        <end position="324"/>
    </location>
    <ligand>
        <name>substrate</name>
        <note>ligand shared with subunit alpha</note>
    </ligand>
</feature>
<accession>Q14IV5</accession>